<gene>
    <name evidence="1" type="primary">flgH</name>
    <name type="ordered locus">YpAngola_A0221</name>
</gene>
<protein>
    <recommendedName>
        <fullName evidence="1">Flagellar L-ring protein</fullName>
    </recommendedName>
    <alternativeName>
        <fullName evidence="1">Basal body L-ring protein</fullName>
    </alternativeName>
</protein>
<comment type="function">
    <text evidence="1">Assembles around the rod to form the L-ring and probably protects the motor/basal body from shearing forces during rotation.</text>
</comment>
<comment type="subunit">
    <text evidence="1">The basal body constitutes a major portion of the flagellar organelle and consists of four rings (L,P,S, and M) mounted on a central rod.</text>
</comment>
<comment type="subcellular location">
    <subcellularLocation>
        <location evidence="1">Cell outer membrane</location>
        <topology evidence="1">Lipid-anchor</topology>
    </subcellularLocation>
    <subcellularLocation>
        <location evidence="1">Bacterial flagellum basal body</location>
    </subcellularLocation>
</comment>
<comment type="similarity">
    <text evidence="1">Belongs to the FlgH family.</text>
</comment>
<reference key="1">
    <citation type="journal article" date="2010" name="J. Bacteriol.">
        <title>Genome sequence of the deep-rooted Yersinia pestis strain Angola reveals new insights into the evolution and pangenome of the plague bacterium.</title>
        <authorList>
            <person name="Eppinger M."/>
            <person name="Worsham P.L."/>
            <person name="Nikolich M.P."/>
            <person name="Riley D.R."/>
            <person name="Sebastian Y."/>
            <person name="Mou S."/>
            <person name="Achtman M."/>
            <person name="Lindler L.E."/>
            <person name="Ravel J."/>
        </authorList>
    </citation>
    <scope>NUCLEOTIDE SEQUENCE [LARGE SCALE GENOMIC DNA]</scope>
    <source>
        <strain>Angola</strain>
    </source>
</reference>
<sequence>MKRFLILTPMVLALCGCESPALLVQKDDAEFAPPANLIQPATVTEGGGLFQPANSWSLLQDRRAYRIGDILTVILDESTQSSKQAKTNFGKKNDMSLGVPEVLGKKLNKFGGSISGKRDFDGSATSAQQNMLRGSITVAVHQVLPNGVLVIRGEKWLTLNQGDEYMRVTGLVRADDVARDNSVSSQRIANARISYAGRGALSDANSAGWLTRFFNHPLFPI</sequence>
<accession>A9R6X4</accession>
<name>FLGH_YERPG</name>
<evidence type="ECO:0000255" key="1">
    <source>
        <dbReference type="HAMAP-Rule" id="MF_00415"/>
    </source>
</evidence>
<keyword id="KW-0975">Bacterial flagellum</keyword>
<keyword id="KW-0998">Cell outer membrane</keyword>
<keyword id="KW-0449">Lipoprotein</keyword>
<keyword id="KW-0472">Membrane</keyword>
<keyword id="KW-0564">Palmitate</keyword>
<keyword id="KW-0732">Signal</keyword>
<feature type="signal peptide" evidence="1">
    <location>
        <begin position="1"/>
        <end position="16"/>
    </location>
</feature>
<feature type="chain" id="PRO_1000123965" description="Flagellar L-ring protein">
    <location>
        <begin position="17"/>
        <end position="221"/>
    </location>
</feature>
<feature type="lipid moiety-binding region" description="N-palmitoyl cysteine" evidence="1">
    <location>
        <position position="17"/>
    </location>
</feature>
<feature type="lipid moiety-binding region" description="S-diacylglycerol cysteine" evidence="1">
    <location>
        <position position="17"/>
    </location>
</feature>
<dbReference type="EMBL" id="CP000901">
    <property type="protein sequence ID" value="ABX87089.1"/>
    <property type="molecule type" value="Genomic_DNA"/>
</dbReference>
<dbReference type="RefSeq" id="WP_002211429.1">
    <property type="nucleotide sequence ID" value="NZ_CP009935.1"/>
</dbReference>
<dbReference type="SMR" id="A9R6X4"/>
<dbReference type="GeneID" id="57973897"/>
<dbReference type="KEGG" id="ypg:YpAngola_A0221"/>
<dbReference type="GO" id="GO:0009427">
    <property type="term" value="C:bacterial-type flagellum basal body, distal rod, L ring"/>
    <property type="evidence" value="ECO:0007669"/>
    <property type="project" value="InterPro"/>
</dbReference>
<dbReference type="GO" id="GO:0009279">
    <property type="term" value="C:cell outer membrane"/>
    <property type="evidence" value="ECO:0007669"/>
    <property type="project" value="UniProtKB-SubCell"/>
</dbReference>
<dbReference type="GO" id="GO:0003774">
    <property type="term" value="F:cytoskeletal motor activity"/>
    <property type="evidence" value="ECO:0007669"/>
    <property type="project" value="InterPro"/>
</dbReference>
<dbReference type="GO" id="GO:0071973">
    <property type="term" value="P:bacterial-type flagellum-dependent cell motility"/>
    <property type="evidence" value="ECO:0007669"/>
    <property type="project" value="InterPro"/>
</dbReference>
<dbReference type="HAMAP" id="MF_00415">
    <property type="entry name" value="FlgH"/>
    <property type="match status" value="1"/>
</dbReference>
<dbReference type="InterPro" id="IPR000527">
    <property type="entry name" value="Flag_Lring"/>
</dbReference>
<dbReference type="NCBIfam" id="NF001304">
    <property type="entry name" value="PRK00249.1-4"/>
    <property type="match status" value="1"/>
</dbReference>
<dbReference type="NCBIfam" id="NF009072">
    <property type="entry name" value="PRK12407.1"/>
    <property type="match status" value="1"/>
</dbReference>
<dbReference type="PANTHER" id="PTHR34933">
    <property type="entry name" value="FLAGELLAR L-RING PROTEIN"/>
    <property type="match status" value="1"/>
</dbReference>
<dbReference type="PANTHER" id="PTHR34933:SF1">
    <property type="entry name" value="FLAGELLAR L-RING PROTEIN"/>
    <property type="match status" value="1"/>
</dbReference>
<dbReference type="Pfam" id="PF02107">
    <property type="entry name" value="FlgH"/>
    <property type="match status" value="1"/>
</dbReference>
<dbReference type="PRINTS" id="PR01008">
    <property type="entry name" value="FLGLRINGFLGH"/>
</dbReference>
<dbReference type="PROSITE" id="PS51257">
    <property type="entry name" value="PROKAR_LIPOPROTEIN"/>
    <property type="match status" value="1"/>
</dbReference>
<organism>
    <name type="scientific">Yersinia pestis bv. Antiqua (strain Angola)</name>
    <dbReference type="NCBI Taxonomy" id="349746"/>
    <lineage>
        <taxon>Bacteria</taxon>
        <taxon>Pseudomonadati</taxon>
        <taxon>Pseudomonadota</taxon>
        <taxon>Gammaproteobacteria</taxon>
        <taxon>Enterobacterales</taxon>
        <taxon>Yersiniaceae</taxon>
        <taxon>Yersinia</taxon>
    </lineage>
</organism>
<proteinExistence type="inferred from homology"/>